<accession>Q46GV5</accession>
<evidence type="ECO:0000255" key="1">
    <source>
        <dbReference type="HAMAP-Rule" id="MF_00522"/>
    </source>
</evidence>
<comment type="function">
    <text evidence="1">May help in the organization of the PsaE and PsaF subunits.</text>
</comment>
<comment type="subcellular location">
    <subcellularLocation>
        <location evidence="1">Cellular thylakoid membrane</location>
        <topology evidence="1">Single-pass membrane protein</topology>
    </subcellularLocation>
</comment>
<comment type="similarity">
    <text evidence="1">Belongs to the PsaJ family.</text>
</comment>
<reference key="1">
    <citation type="journal article" date="2007" name="PLoS Genet.">
        <title>Patterns and implications of gene gain and loss in the evolution of Prochlorococcus.</title>
        <authorList>
            <person name="Kettler G.C."/>
            <person name="Martiny A.C."/>
            <person name="Huang K."/>
            <person name="Zucker J."/>
            <person name="Coleman M.L."/>
            <person name="Rodrigue S."/>
            <person name="Chen F."/>
            <person name="Lapidus A."/>
            <person name="Ferriera S."/>
            <person name="Johnson J."/>
            <person name="Steglich C."/>
            <person name="Church G.M."/>
            <person name="Richardson P."/>
            <person name="Chisholm S.W."/>
        </authorList>
    </citation>
    <scope>NUCLEOTIDE SEQUENCE [LARGE SCALE GENOMIC DNA]</scope>
    <source>
        <strain>NATL2A</strain>
    </source>
</reference>
<feature type="chain" id="PRO_0000268759" description="Photosystem I reaction center subunit IX 1">
    <location>
        <begin position="1"/>
        <end position="45"/>
    </location>
</feature>
<feature type="transmembrane region" description="Helical" evidence="1">
    <location>
        <begin position="9"/>
        <end position="29"/>
    </location>
</feature>
<name>PSAJ1_PROMT</name>
<proteinExistence type="inferred from homology"/>
<dbReference type="EMBL" id="CP000095">
    <property type="protein sequence ID" value="AAZ59288.1"/>
    <property type="molecule type" value="Genomic_DNA"/>
</dbReference>
<dbReference type="SMR" id="Q46GV5"/>
<dbReference type="STRING" id="59920.PMN2A_1800"/>
<dbReference type="KEGG" id="pmn:PMN2A_1800"/>
<dbReference type="HOGENOM" id="CLU_212133_1_1_3"/>
<dbReference type="OrthoDB" id="532702at2"/>
<dbReference type="PhylomeDB" id="Q46GV5"/>
<dbReference type="Proteomes" id="UP000002535">
    <property type="component" value="Chromosome"/>
</dbReference>
<dbReference type="GO" id="GO:0009522">
    <property type="term" value="C:photosystem I"/>
    <property type="evidence" value="ECO:0007669"/>
    <property type="project" value="UniProtKB-KW"/>
</dbReference>
<dbReference type="GO" id="GO:0031676">
    <property type="term" value="C:plasma membrane-derived thylakoid membrane"/>
    <property type="evidence" value="ECO:0007669"/>
    <property type="project" value="UniProtKB-SubCell"/>
</dbReference>
<dbReference type="GO" id="GO:0015979">
    <property type="term" value="P:photosynthesis"/>
    <property type="evidence" value="ECO:0007669"/>
    <property type="project" value="UniProtKB-UniRule"/>
</dbReference>
<dbReference type="Gene3D" id="1.20.5.510">
    <property type="entry name" value="Single helix bin"/>
    <property type="match status" value="1"/>
</dbReference>
<dbReference type="HAMAP" id="MF_00522">
    <property type="entry name" value="PSI_PsaJ"/>
    <property type="match status" value="1"/>
</dbReference>
<dbReference type="InterPro" id="IPR002615">
    <property type="entry name" value="PSI_PsaJ"/>
</dbReference>
<dbReference type="InterPro" id="IPR036062">
    <property type="entry name" value="PSI_PsaJ_sf"/>
</dbReference>
<dbReference type="NCBIfam" id="NF002743">
    <property type="entry name" value="PRK02733.1"/>
    <property type="match status" value="1"/>
</dbReference>
<dbReference type="PANTHER" id="PTHR36082">
    <property type="match status" value="1"/>
</dbReference>
<dbReference type="PANTHER" id="PTHR36082:SF2">
    <property type="entry name" value="PHOTOSYSTEM I REACTION CENTER SUBUNIT IX"/>
    <property type="match status" value="1"/>
</dbReference>
<dbReference type="Pfam" id="PF01701">
    <property type="entry name" value="PSI_PsaJ"/>
    <property type="match status" value="1"/>
</dbReference>
<dbReference type="SUPFAM" id="SSF81544">
    <property type="entry name" value="Subunit IX of photosystem I reaction centre, PsaJ"/>
    <property type="match status" value="1"/>
</dbReference>
<protein>
    <recommendedName>
        <fullName evidence="1">Photosystem I reaction center subunit IX 1</fullName>
    </recommendedName>
</protein>
<organism>
    <name type="scientific">Prochlorococcus marinus (strain NATL2A)</name>
    <dbReference type="NCBI Taxonomy" id="59920"/>
    <lineage>
        <taxon>Bacteria</taxon>
        <taxon>Bacillati</taxon>
        <taxon>Cyanobacteriota</taxon>
        <taxon>Cyanophyceae</taxon>
        <taxon>Synechococcales</taxon>
        <taxon>Prochlorococcaceae</taxon>
        <taxon>Prochlorococcus</taxon>
    </lineage>
</organism>
<gene>
    <name evidence="1" type="primary">psaJ1</name>
    <name type="ordered locus">PMN2A_1800</name>
</gene>
<sequence length="45" mass="5345">MFQLFRTKWFRSAPVVATIWITLTAGIIVEFNRFVPDLLFHPMSF</sequence>
<keyword id="KW-0472">Membrane</keyword>
<keyword id="KW-0602">Photosynthesis</keyword>
<keyword id="KW-0603">Photosystem I</keyword>
<keyword id="KW-1185">Reference proteome</keyword>
<keyword id="KW-0793">Thylakoid</keyword>
<keyword id="KW-0812">Transmembrane</keyword>
<keyword id="KW-1133">Transmembrane helix</keyword>